<proteinExistence type="inferred from homology"/>
<dbReference type="EC" id="1.5.1.36"/>
<dbReference type="EMBL" id="AE000516">
    <property type="protein sequence ID" value="AAK48031.1"/>
    <property type="molecule type" value="Genomic_DNA"/>
</dbReference>
<dbReference type="PIR" id="E70605">
    <property type="entry name" value="E70605"/>
</dbReference>
<dbReference type="RefSeq" id="WP_003900713.1">
    <property type="nucleotide sequence ID" value="NZ_KK341227.1"/>
</dbReference>
<dbReference type="SMR" id="P9WND8"/>
<dbReference type="KEGG" id="mtc:MT3672"/>
<dbReference type="PATRIC" id="fig|83331.31.peg.3954"/>
<dbReference type="HOGENOM" id="CLU_059021_1_0_11"/>
<dbReference type="UniPathway" id="UPA00062"/>
<dbReference type="Proteomes" id="UP000001020">
    <property type="component" value="Chromosome"/>
</dbReference>
<dbReference type="GO" id="GO:0036382">
    <property type="term" value="F:flavin reductase (NADH) activity"/>
    <property type="evidence" value="ECO:0007669"/>
    <property type="project" value="UniProtKB-EC"/>
</dbReference>
<dbReference type="GO" id="GO:0010181">
    <property type="term" value="F:FMN binding"/>
    <property type="evidence" value="ECO:0007669"/>
    <property type="project" value="InterPro"/>
</dbReference>
<dbReference type="GO" id="GO:0042602">
    <property type="term" value="F:riboflavin reductase (NADPH) activity"/>
    <property type="evidence" value="ECO:0007669"/>
    <property type="project" value="TreeGrafter"/>
</dbReference>
<dbReference type="GO" id="GO:0016042">
    <property type="term" value="P:lipid catabolic process"/>
    <property type="evidence" value="ECO:0007669"/>
    <property type="project" value="UniProtKB-KW"/>
</dbReference>
<dbReference type="GO" id="GO:0006694">
    <property type="term" value="P:steroid biosynthetic process"/>
    <property type="evidence" value="ECO:0007669"/>
    <property type="project" value="UniProtKB-UniPathway"/>
</dbReference>
<dbReference type="FunFam" id="2.30.110.10:FF:000017">
    <property type="entry name" value="Flavin-dependent monooxygenase, reductase subunit"/>
    <property type="match status" value="1"/>
</dbReference>
<dbReference type="Gene3D" id="2.30.110.10">
    <property type="entry name" value="Electron Transport, Fmn-binding Protein, Chain A"/>
    <property type="match status" value="1"/>
</dbReference>
<dbReference type="InterPro" id="IPR002563">
    <property type="entry name" value="Flavin_Rdtase-like_dom"/>
</dbReference>
<dbReference type="InterPro" id="IPR054682">
    <property type="entry name" value="HsaB"/>
</dbReference>
<dbReference type="InterPro" id="IPR050268">
    <property type="entry name" value="NADH-dep_flavin_reductase"/>
</dbReference>
<dbReference type="InterPro" id="IPR012349">
    <property type="entry name" value="Split_barrel_FMN-bd"/>
</dbReference>
<dbReference type="NCBIfam" id="NF045630">
    <property type="entry name" value="monooxsub_HsaB"/>
    <property type="match status" value="1"/>
</dbReference>
<dbReference type="PANTHER" id="PTHR30466">
    <property type="entry name" value="FLAVIN REDUCTASE"/>
    <property type="match status" value="1"/>
</dbReference>
<dbReference type="PANTHER" id="PTHR30466:SF11">
    <property type="entry name" value="FLAVIN-DEPENDENT MONOOXYGENASE, REDUCTASE SUBUNIT HSAB"/>
    <property type="match status" value="1"/>
</dbReference>
<dbReference type="Pfam" id="PF01613">
    <property type="entry name" value="Flavin_Reduct"/>
    <property type="match status" value="1"/>
</dbReference>
<dbReference type="SMART" id="SM00903">
    <property type="entry name" value="Flavin_Reduct"/>
    <property type="match status" value="1"/>
</dbReference>
<dbReference type="SUPFAM" id="SSF50475">
    <property type="entry name" value="FMN-binding split barrel"/>
    <property type="match status" value="1"/>
</dbReference>
<accession>P9WND8</accession>
<accession>L0TG39</accession>
<accession>P96849</accession>
<accession>Q7D598</accession>
<comment type="function">
    <text evidence="1">Catalyzes the reduction of free flavins (FMN or FAD) by NADH. Subsequently, the reduced flavins diffuse to the HsaA oxygenase subunit (By similarity).</text>
</comment>
<comment type="catalytic activity">
    <reaction>
        <text>a reduced flavin + NAD(+) = an oxidized flavin + NADH + 2 H(+)</text>
        <dbReference type="Rhea" id="RHEA:31303"/>
        <dbReference type="ChEBI" id="CHEBI:15378"/>
        <dbReference type="ChEBI" id="CHEBI:57540"/>
        <dbReference type="ChEBI" id="CHEBI:57945"/>
        <dbReference type="ChEBI" id="CHEBI:60531"/>
        <dbReference type="ChEBI" id="CHEBI:62787"/>
        <dbReference type="EC" id="1.5.1.36"/>
    </reaction>
</comment>
<comment type="pathway">
    <text>Lipid metabolism; steroid biosynthesis.</text>
</comment>
<comment type="subunit">
    <text evidence="1">HsaAB monooxygenase consists of an oxygenase component HsaA and a reductase component HsaB.</text>
</comment>
<comment type="similarity">
    <text evidence="2">Belongs to the non-flavoprotein flavin reductase family.</text>
</comment>
<protein>
    <recommendedName>
        <fullName>Flavin-dependent monooxygenase, reductase subunit HsaB</fullName>
        <ecNumber>1.5.1.36</ecNumber>
    </recommendedName>
    <alternativeName>
        <fullName>3-hydroxy-9,10-secoandrosta-1,3,5(10)-triene-9,17-dione 4-hydroxylase, reductase subunit</fullName>
    </alternativeName>
    <alternativeName>
        <fullName>Flavin:NADH reductase</fullName>
    </alternativeName>
</protein>
<keyword id="KW-0058">Aromatic hydrocarbons catabolism</keyword>
<keyword id="KW-0274">FAD</keyword>
<keyword id="KW-0285">Flavoprotein</keyword>
<keyword id="KW-0288">FMN</keyword>
<keyword id="KW-0442">Lipid degradation</keyword>
<keyword id="KW-0443">Lipid metabolism</keyword>
<keyword id="KW-0520">NAD</keyword>
<keyword id="KW-0560">Oxidoreductase</keyword>
<keyword id="KW-1185">Reference proteome</keyword>
<keyword id="KW-0753">Steroid metabolism</keyword>
<gene>
    <name type="primary">hsaB</name>
    <name type="ordered locus">MT3672</name>
</gene>
<feature type="chain" id="PRO_0000427144" description="Flavin-dependent monooxygenase, reductase subunit HsaB">
    <location>
        <begin position="1"/>
        <end position="187"/>
    </location>
</feature>
<feature type="binding site" evidence="1">
    <location>
        <begin position="32"/>
        <end position="36"/>
    </location>
    <ligand>
        <name>FAD</name>
        <dbReference type="ChEBI" id="CHEBI:57692"/>
    </ligand>
</feature>
<feature type="binding site" evidence="1">
    <location>
        <begin position="38"/>
        <end position="39"/>
    </location>
    <ligand>
        <name>FAD</name>
        <dbReference type="ChEBI" id="CHEBI:57692"/>
    </ligand>
</feature>
<feature type="binding site" evidence="1">
    <location>
        <begin position="53"/>
        <end position="55"/>
    </location>
    <ligand>
        <name>FAD</name>
        <dbReference type="ChEBI" id="CHEBI:57692"/>
    </ligand>
</feature>
<feature type="binding site" evidence="1">
    <location>
        <begin position="59"/>
        <end position="60"/>
    </location>
    <ligand>
        <name>FAD</name>
        <dbReference type="ChEBI" id="CHEBI:57692"/>
    </ligand>
</feature>
<feature type="binding site" evidence="1">
    <location>
        <begin position="85"/>
        <end position="86"/>
    </location>
    <ligand>
        <name>FAD</name>
        <dbReference type="ChEBI" id="CHEBI:57692"/>
    </ligand>
</feature>
<feature type="binding site" evidence="1">
    <location>
        <begin position="152"/>
        <end position="155"/>
    </location>
    <ligand>
        <name>NAD(+)</name>
        <dbReference type="ChEBI" id="CHEBI:57540"/>
    </ligand>
</feature>
<evidence type="ECO:0000250" key="1"/>
<evidence type="ECO:0000305" key="2"/>
<sequence>MSAQIDPRTFRSVLGQFCTGITVITTVHDDVPVGFACQSFAALSLEPPLVLFCPTKVSRSWQAIEASGRFCVNVLTEKQKDVSARFGSKEPDKFAGIDWRPSELGSPIIEGSLAYIDCTVASVHDGGDHFVVFGAVESLSEVPAVKPRPLLFYRGDYTGIEPEKTTPAHWRDDLEAFLITTTQDTWL</sequence>
<name>HSAB_MYCTO</name>
<reference key="1">
    <citation type="journal article" date="2002" name="J. Bacteriol.">
        <title>Whole-genome comparison of Mycobacterium tuberculosis clinical and laboratory strains.</title>
        <authorList>
            <person name="Fleischmann R.D."/>
            <person name="Alland D."/>
            <person name="Eisen J.A."/>
            <person name="Carpenter L."/>
            <person name="White O."/>
            <person name="Peterson J.D."/>
            <person name="DeBoy R.T."/>
            <person name="Dodson R.J."/>
            <person name="Gwinn M.L."/>
            <person name="Haft D.H."/>
            <person name="Hickey E.K."/>
            <person name="Kolonay J.F."/>
            <person name="Nelson W.C."/>
            <person name="Umayam L.A."/>
            <person name="Ermolaeva M.D."/>
            <person name="Salzberg S.L."/>
            <person name="Delcher A."/>
            <person name="Utterback T.R."/>
            <person name="Weidman J.F."/>
            <person name="Khouri H.M."/>
            <person name="Gill J."/>
            <person name="Mikula A."/>
            <person name="Bishai W."/>
            <person name="Jacobs W.R. Jr."/>
            <person name="Venter J.C."/>
            <person name="Fraser C.M."/>
        </authorList>
    </citation>
    <scope>NUCLEOTIDE SEQUENCE [LARGE SCALE GENOMIC DNA]</scope>
    <source>
        <strain>CDC 1551 / Oshkosh</strain>
    </source>
</reference>
<organism>
    <name type="scientific">Mycobacterium tuberculosis (strain CDC 1551 / Oshkosh)</name>
    <dbReference type="NCBI Taxonomy" id="83331"/>
    <lineage>
        <taxon>Bacteria</taxon>
        <taxon>Bacillati</taxon>
        <taxon>Actinomycetota</taxon>
        <taxon>Actinomycetes</taxon>
        <taxon>Mycobacteriales</taxon>
        <taxon>Mycobacteriaceae</taxon>
        <taxon>Mycobacterium</taxon>
        <taxon>Mycobacterium tuberculosis complex</taxon>
    </lineage>
</organism>